<sequence>MQKLIILLLVAAVLMSTQAVLQEKRPKEKIKFLSKRKTDAEKQQKRLCPDYTDPCSHAHECCSWNCYNGHCTG</sequence>
<evidence type="ECO:0000250" key="1"/>
<evidence type="ECO:0000255" key="2"/>
<evidence type="ECO:0000269" key="3">
    <source>
    </source>
</evidence>
<evidence type="ECO:0000305" key="4"/>
<organism>
    <name type="scientific">Conus textile</name>
    <name type="common">Cloth-of-gold cone</name>
    <dbReference type="NCBI Taxonomy" id="6494"/>
    <lineage>
        <taxon>Eukaryota</taxon>
        <taxon>Metazoa</taxon>
        <taxon>Spiralia</taxon>
        <taxon>Lophotrochozoa</taxon>
        <taxon>Mollusca</taxon>
        <taxon>Gastropoda</taxon>
        <taxon>Caenogastropoda</taxon>
        <taxon>Neogastropoda</taxon>
        <taxon>Conoidea</taxon>
        <taxon>Conidae</taxon>
        <taxon>Conus</taxon>
        <taxon>Cylinder</taxon>
    </lineage>
</organism>
<reference key="1">
    <citation type="journal article" date="2001" name="Mol. Biol. Evol.">
        <title>Mechanisms for evolving hypervariability: the case of conopeptides.</title>
        <authorList>
            <person name="Conticello S.G."/>
            <person name="Gilad Y."/>
            <person name="Avidan N."/>
            <person name="Ben-Asher E."/>
            <person name="Levy Z."/>
            <person name="Fainzilber M."/>
        </authorList>
    </citation>
    <scope>NUCLEOTIDE SEQUENCE [MRNA]</scope>
    <source>
        <tissue>Venom duct</tissue>
    </source>
</reference>
<reference key="2">
    <citation type="journal article" date="2006" name="FEBS J.">
        <title>Novel gamma-carboxyglutamic acid-containing peptides from the venom of Conus textile.</title>
        <authorList>
            <person name="Czerwiec E."/>
            <person name="Kalume D.E."/>
            <person name="Roepstorff P."/>
            <person name="Hambe B."/>
            <person name="Furie B."/>
            <person name="Furie B.C."/>
            <person name="Stenflo J."/>
        </authorList>
    </citation>
    <scope>PROTEIN SEQUENCE OF 47-73</scope>
    <scope>MASS SPECTROMETRY</scope>
    <scope>HYDROXYLATION AT PRO-49 AND PRO-54</scope>
    <scope>GAMMA-CARBOXYGLUTAMATION AT GLU-60</scope>
    <scope>BROMINATION AT TRP-64</scope>
    <source>
        <tissue>Venom</tissue>
    </source>
</reference>
<keyword id="KW-0102">Bromination</keyword>
<keyword id="KW-0165">Cleavage on pair of basic residues</keyword>
<keyword id="KW-0903">Direct protein sequencing</keyword>
<keyword id="KW-1015">Disulfide bond</keyword>
<keyword id="KW-0301">Gamma-carboxyglutamic acid</keyword>
<keyword id="KW-0379">Hydroxylation</keyword>
<keyword id="KW-0960">Knottin</keyword>
<keyword id="KW-0528">Neurotoxin</keyword>
<keyword id="KW-0964">Secreted</keyword>
<keyword id="KW-0732">Signal</keyword>
<keyword id="KW-0800">Toxin</keyword>
<dbReference type="EMBL" id="AF215023">
    <property type="protein sequence ID" value="AAG60451.1"/>
    <property type="molecule type" value="mRNA"/>
</dbReference>
<dbReference type="SMR" id="Q9BPB2"/>
<dbReference type="ConoServer" id="710">
    <property type="toxin name" value="Gla(3)-TxVI precursor"/>
</dbReference>
<dbReference type="GO" id="GO:0005576">
    <property type="term" value="C:extracellular region"/>
    <property type="evidence" value="ECO:0007669"/>
    <property type="project" value="UniProtKB-SubCell"/>
</dbReference>
<dbReference type="GO" id="GO:0008200">
    <property type="term" value="F:ion channel inhibitor activity"/>
    <property type="evidence" value="ECO:0007669"/>
    <property type="project" value="InterPro"/>
</dbReference>
<dbReference type="GO" id="GO:0090729">
    <property type="term" value="F:toxin activity"/>
    <property type="evidence" value="ECO:0007669"/>
    <property type="project" value="UniProtKB-KW"/>
</dbReference>
<dbReference type="InterPro" id="IPR004214">
    <property type="entry name" value="Conotoxin"/>
</dbReference>
<dbReference type="Pfam" id="PF02950">
    <property type="entry name" value="Conotoxin"/>
    <property type="match status" value="1"/>
</dbReference>
<feature type="signal peptide" evidence="2">
    <location>
        <begin position="1"/>
        <end position="19"/>
    </location>
</feature>
<feature type="propeptide" id="PRO_0000404792">
    <location>
        <begin position="20"/>
        <end position="44"/>
    </location>
</feature>
<feature type="peptide" id="PRO_0000404793" description="Conotoxin Asp7/Gla(3)-TxVI">
    <location>
        <begin position="47"/>
        <end position="73"/>
    </location>
</feature>
<feature type="modified residue" description="4-hydroxyproline" evidence="3">
    <location>
        <position position="49"/>
    </location>
</feature>
<feature type="modified residue" description="4-hydroxyproline" evidence="3">
    <location>
        <position position="54"/>
    </location>
</feature>
<feature type="modified residue" description="4-carboxyglutamate" evidence="3">
    <location>
        <position position="60"/>
    </location>
</feature>
<feature type="modified residue" description="6'-bromotryptophan" evidence="3">
    <location>
        <position position="64"/>
    </location>
</feature>
<feature type="disulfide bond" evidence="1">
    <location>
        <begin position="48"/>
        <end position="62"/>
    </location>
</feature>
<feature type="disulfide bond" evidence="1">
    <location>
        <begin position="55"/>
        <end position="66"/>
    </location>
</feature>
<feature type="disulfide bond" evidence="1">
    <location>
        <begin position="61"/>
        <end position="71"/>
    </location>
</feature>
<name>O236D_CONTE</name>
<comment type="subcellular location">
    <subcellularLocation>
        <location evidence="1">Secreted</location>
    </subcellularLocation>
</comment>
<comment type="tissue specificity">
    <text>Expressed by the venom duct.</text>
</comment>
<comment type="domain">
    <text evidence="1">The presence of a 'disulfide through disulfide knot' structurally defines this protein as a knottin.</text>
</comment>
<comment type="domain">
    <text>The cysteine framework is VI/VII (C-C-CC-C-C).</text>
</comment>
<comment type="mass spectrometry"/>
<comment type="similarity">
    <text evidence="4">Belongs to the conotoxin O2 superfamily.</text>
</comment>
<proteinExistence type="evidence at protein level"/>
<accession>Q9BPB2</accession>
<protein>
    <recommendedName>
        <fullName>Conotoxin Asp7/Gla(3)-TxVI</fullName>
    </recommendedName>
    <alternativeName>
        <fullName>Conotoxin TxMEKL-0421</fullName>
    </alternativeName>
</protein>